<gene>
    <name type="primary">amnG</name>
    <name type="ordered locus">Bxeno_A3258</name>
    <name type="ORF">Bxe_A1152</name>
</gene>
<sequence length="345" mass="37003">MSINGNAAASKLYISDVTLRDGSHAIRHQYSVPQVRQIALALDEARVDSIEVAHGDGLQGSSFNYGFGAHTDVEWIEAVADVVKHAKIATLLLPGIGTVHDLQAAYNAGARIVRVATHCTEADVSRQHIELARKLDMDTVGFLMMSHMSSPQALAEQAKLMESYGATCCYVVDSGGAMNMNDVRDRVLALREVLQPETAIGIHAHHNLSLGVANSIVAVEAGAIRVDASLAGMGAGAGNAPLEVFIAAAERMGWQHGTDLYRLMDAADDIVRPLQDRPVRVDRETLALGYAGVYSSFLRHAEAAGHKYGLKTVDILVELGKRRMVGGQEDMIVDVALDLAQQTTT</sequence>
<accession>Q13VU3</accession>
<keyword id="KW-0058">Aromatic hydrocarbons catabolism</keyword>
<keyword id="KW-0456">Lyase</keyword>
<keyword id="KW-0464">Manganese</keyword>
<keyword id="KW-0479">Metal-binding</keyword>
<keyword id="KW-1185">Reference proteome</keyword>
<proteinExistence type="inferred from homology"/>
<organism>
    <name type="scientific">Paraburkholderia xenovorans (strain LB400)</name>
    <dbReference type="NCBI Taxonomy" id="266265"/>
    <lineage>
        <taxon>Bacteria</taxon>
        <taxon>Pseudomonadati</taxon>
        <taxon>Pseudomonadota</taxon>
        <taxon>Betaproteobacteria</taxon>
        <taxon>Burkholderiales</taxon>
        <taxon>Burkholderiaceae</taxon>
        <taxon>Paraburkholderia</taxon>
    </lineage>
</organism>
<feature type="chain" id="PRO_0000387809" description="4-hydroxy-2-oxovalerate aldolase 2">
    <location>
        <begin position="1"/>
        <end position="345"/>
    </location>
</feature>
<feature type="domain" description="Pyruvate carboxyltransferase" evidence="1">
    <location>
        <begin position="12"/>
        <end position="264"/>
    </location>
</feature>
<feature type="active site" description="Proton acceptor" evidence="1">
    <location>
        <position position="24"/>
    </location>
</feature>
<feature type="binding site" evidence="1">
    <location>
        <begin position="20"/>
        <end position="21"/>
    </location>
    <ligand>
        <name>substrate</name>
    </ligand>
</feature>
<feature type="binding site" evidence="1">
    <location>
        <position position="21"/>
    </location>
    <ligand>
        <name>Mn(2+)</name>
        <dbReference type="ChEBI" id="CHEBI:29035"/>
    </ligand>
</feature>
<feature type="binding site" evidence="1">
    <location>
        <position position="174"/>
    </location>
    <ligand>
        <name>substrate</name>
    </ligand>
</feature>
<feature type="binding site" evidence="1">
    <location>
        <position position="203"/>
    </location>
    <ligand>
        <name>Mn(2+)</name>
        <dbReference type="ChEBI" id="CHEBI:29035"/>
    </ligand>
</feature>
<feature type="binding site" evidence="1">
    <location>
        <position position="203"/>
    </location>
    <ligand>
        <name>substrate</name>
    </ligand>
</feature>
<feature type="binding site" evidence="1">
    <location>
        <position position="205"/>
    </location>
    <ligand>
        <name>Mn(2+)</name>
        <dbReference type="ChEBI" id="CHEBI:29035"/>
    </ligand>
</feature>
<feature type="binding site" evidence="1">
    <location>
        <position position="294"/>
    </location>
    <ligand>
        <name>substrate</name>
    </ligand>
</feature>
<feature type="site" description="Transition state stabilizer" evidence="1">
    <location>
        <position position="20"/>
    </location>
</feature>
<dbReference type="EC" id="4.1.3.39" evidence="1"/>
<dbReference type="EMBL" id="CP000270">
    <property type="protein sequence ID" value="ABE31796.1"/>
    <property type="molecule type" value="Genomic_DNA"/>
</dbReference>
<dbReference type="SMR" id="Q13VU3"/>
<dbReference type="STRING" id="266265.Bxe_A1152"/>
<dbReference type="KEGG" id="bxb:DR64_3311"/>
<dbReference type="KEGG" id="bxe:Bxe_A1152"/>
<dbReference type="eggNOG" id="COG0119">
    <property type="taxonomic scope" value="Bacteria"/>
</dbReference>
<dbReference type="OrthoDB" id="9803573at2"/>
<dbReference type="Proteomes" id="UP000001817">
    <property type="component" value="Chromosome 1"/>
</dbReference>
<dbReference type="GO" id="GO:0003852">
    <property type="term" value="F:2-isopropylmalate synthase activity"/>
    <property type="evidence" value="ECO:0007669"/>
    <property type="project" value="TreeGrafter"/>
</dbReference>
<dbReference type="GO" id="GO:0008701">
    <property type="term" value="F:4-hydroxy-2-oxovalerate aldolase activity"/>
    <property type="evidence" value="ECO:0007669"/>
    <property type="project" value="UniProtKB-UniRule"/>
</dbReference>
<dbReference type="GO" id="GO:0030145">
    <property type="term" value="F:manganese ion binding"/>
    <property type="evidence" value="ECO:0007669"/>
    <property type="project" value="UniProtKB-UniRule"/>
</dbReference>
<dbReference type="GO" id="GO:0009056">
    <property type="term" value="P:catabolic process"/>
    <property type="evidence" value="ECO:0007669"/>
    <property type="project" value="UniProtKB-KW"/>
</dbReference>
<dbReference type="GO" id="GO:0009098">
    <property type="term" value="P:L-leucine biosynthetic process"/>
    <property type="evidence" value="ECO:0007669"/>
    <property type="project" value="TreeGrafter"/>
</dbReference>
<dbReference type="CDD" id="cd07943">
    <property type="entry name" value="DRE_TIM_HOA"/>
    <property type="match status" value="1"/>
</dbReference>
<dbReference type="FunFam" id="1.10.8.60:FF:000042">
    <property type="entry name" value="4-hydroxy-2-oxovalerate aldolase"/>
    <property type="match status" value="1"/>
</dbReference>
<dbReference type="Gene3D" id="1.10.8.60">
    <property type="match status" value="1"/>
</dbReference>
<dbReference type="Gene3D" id="3.20.20.70">
    <property type="entry name" value="Aldolase class I"/>
    <property type="match status" value="1"/>
</dbReference>
<dbReference type="HAMAP" id="MF_01656">
    <property type="entry name" value="HOA"/>
    <property type="match status" value="1"/>
</dbReference>
<dbReference type="InterPro" id="IPR050073">
    <property type="entry name" value="2-IPM_HCS-like"/>
</dbReference>
<dbReference type="InterPro" id="IPR017629">
    <property type="entry name" value="4OH_2_O-val_aldolase"/>
</dbReference>
<dbReference type="InterPro" id="IPR013785">
    <property type="entry name" value="Aldolase_TIM"/>
</dbReference>
<dbReference type="InterPro" id="IPR012425">
    <property type="entry name" value="DmpG_comm"/>
</dbReference>
<dbReference type="InterPro" id="IPR035685">
    <property type="entry name" value="DRE_TIM_HOA"/>
</dbReference>
<dbReference type="InterPro" id="IPR000891">
    <property type="entry name" value="PYR_CT"/>
</dbReference>
<dbReference type="NCBIfam" id="TIGR03217">
    <property type="entry name" value="4OH_2_O_val_ald"/>
    <property type="match status" value="1"/>
</dbReference>
<dbReference type="NCBIfam" id="NF006049">
    <property type="entry name" value="PRK08195.1"/>
    <property type="match status" value="1"/>
</dbReference>
<dbReference type="PANTHER" id="PTHR10277:SF9">
    <property type="entry name" value="2-ISOPROPYLMALATE SYNTHASE 1, CHLOROPLASTIC-RELATED"/>
    <property type="match status" value="1"/>
</dbReference>
<dbReference type="PANTHER" id="PTHR10277">
    <property type="entry name" value="HOMOCITRATE SYNTHASE-RELATED"/>
    <property type="match status" value="1"/>
</dbReference>
<dbReference type="Pfam" id="PF07836">
    <property type="entry name" value="DmpG_comm"/>
    <property type="match status" value="1"/>
</dbReference>
<dbReference type="Pfam" id="PF00682">
    <property type="entry name" value="HMGL-like"/>
    <property type="match status" value="1"/>
</dbReference>
<dbReference type="SUPFAM" id="SSF51569">
    <property type="entry name" value="Aldolase"/>
    <property type="match status" value="1"/>
</dbReference>
<dbReference type="SUPFAM" id="SSF89000">
    <property type="entry name" value="post-HMGL domain-like"/>
    <property type="match status" value="1"/>
</dbReference>
<dbReference type="PROSITE" id="PS50991">
    <property type="entry name" value="PYR_CT"/>
    <property type="match status" value="1"/>
</dbReference>
<comment type="catalytic activity">
    <reaction evidence="1">
        <text>(S)-4-hydroxy-2-oxopentanoate = acetaldehyde + pyruvate</text>
        <dbReference type="Rhea" id="RHEA:22624"/>
        <dbReference type="ChEBI" id="CHEBI:15343"/>
        <dbReference type="ChEBI" id="CHEBI:15361"/>
        <dbReference type="ChEBI" id="CHEBI:73143"/>
        <dbReference type="EC" id="4.1.3.39"/>
    </reaction>
</comment>
<comment type="similarity">
    <text evidence="1">Belongs to the 4-hydroxy-2-oxovalerate aldolase family.</text>
</comment>
<protein>
    <recommendedName>
        <fullName evidence="1">4-hydroxy-2-oxovalerate aldolase 2</fullName>
        <shortName evidence="1">HOA 2</shortName>
        <ecNumber evidence="1">4.1.3.39</ecNumber>
    </recommendedName>
    <alternativeName>
        <fullName evidence="1">4-hydroxy-2-keto-pentanoic acid aldolase 2</fullName>
    </alternativeName>
    <alternativeName>
        <fullName evidence="1">4-hydroxy-2-oxopentanoate aldolase 2</fullName>
    </alternativeName>
</protein>
<reference key="1">
    <citation type="journal article" date="2006" name="Proc. Natl. Acad. Sci. U.S.A.">
        <title>Burkholderia xenovorans LB400 harbors a multi-replicon, 9.73-Mbp genome shaped for versatility.</title>
        <authorList>
            <person name="Chain P.S.G."/>
            <person name="Denef V.J."/>
            <person name="Konstantinidis K.T."/>
            <person name="Vergez L.M."/>
            <person name="Agullo L."/>
            <person name="Reyes V.L."/>
            <person name="Hauser L."/>
            <person name="Cordova M."/>
            <person name="Gomez L."/>
            <person name="Gonzalez M."/>
            <person name="Land M."/>
            <person name="Lao V."/>
            <person name="Larimer F."/>
            <person name="LiPuma J.J."/>
            <person name="Mahenthiralingam E."/>
            <person name="Malfatti S.A."/>
            <person name="Marx C.J."/>
            <person name="Parnell J.J."/>
            <person name="Ramette A."/>
            <person name="Richardson P."/>
            <person name="Seeger M."/>
            <person name="Smith D."/>
            <person name="Spilker T."/>
            <person name="Sul W.J."/>
            <person name="Tsoi T.V."/>
            <person name="Ulrich L.E."/>
            <person name="Zhulin I.B."/>
            <person name="Tiedje J.M."/>
        </authorList>
    </citation>
    <scope>NUCLEOTIDE SEQUENCE [LARGE SCALE GENOMIC DNA]</scope>
    <source>
        <strain>LB400</strain>
    </source>
</reference>
<name>HOA2_PARXL</name>
<evidence type="ECO:0000255" key="1">
    <source>
        <dbReference type="HAMAP-Rule" id="MF_01656"/>
    </source>
</evidence>